<reference key="1">
    <citation type="journal article" date="2008" name="Proc. Natl. Acad. Sci. U.S.A.">
        <title>Nitrogen fixation island and rhizosphere competence traits in the genome of root-associated Pseudomonas stutzeri A1501.</title>
        <authorList>
            <person name="Yan Y."/>
            <person name="Yang J."/>
            <person name="Dou Y."/>
            <person name="Chen M."/>
            <person name="Ping S."/>
            <person name="Peng J."/>
            <person name="Lu W."/>
            <person name="Zhang W."/>
            <person name="Yao Z."/>
            <person name="Li H."/>
            <person name="Liu W."/>
            <person name="He S."/>
            <person name="Geng L."/>
            <person name="Zhang X."/>
            <person name="Yang F."/>
            <person name="Yu H."/>
            <person name="Zhan Y."/>
            <person name="Li D."/>
            <person name="Lin Z."/>
            <person name="Wang Y."/>
            <person name="Elmerich C."/>
            <person name="Lin M."/>
            <person name="Jin Q."/>
        </authorList>
    </citation>
    <scope>NUCLEOTIDE SEQUENCE [LARGE SCALE GENOMIC DNA]</scope>
    <source>
        <strain>A1501</strain>
    </source>
</reference>
<accession>A4VM19</accession>
<proteinExistence type="inferred from homology"/>
<sequence>MARVKRGVVARRRHKKILKLAKGYYGARSRVFRVAKQAVIKAGQYAYRDRRQRKRQFRALWIARINAGARVNGLSYSRLIAGLKKAAIEIDRKVLADLAVNEKAAFAAIVEKAKASLA</sequence>
<dbReference type="EMBL" id="CP000304">
    <property type="protein sequence ID" value="ABP80020.1"/>
    <property type="molecule type" value="Genomic_DNA"/>
</dbReference>
<dbReference type="RefSeq" id="WP_003282569.1">
    <property type="nucleotide sequence ID" value="NC_009434.1"/>
</dbReference>
<dbReference type="SMR" id="A4VM19"/>
<dbReference type="GeneID" id="75214850"/>
<dbReference type="KEGG" id="psa:PST_2366"/>
<dbReference type="eggNOG" id="COG0292">
    <property type="taxonomic scope" value="Bacteria"/>
</dbReference>
<dbReference type="HOGENOM" id="CLU_123265_0_1_6"/>
<dbReference type="Proteomes" id="UP000000233">
    <property type="component" value="Chromosome"/>
</dbReference>
<dbReference type="GO" id="GO:1990904">
    <property type="term" value="C:ribonucleoprotein complex"/>
    <property type="evidence" value="ECO:0007669"/>
    <property type="project" value="UniProtKB-KW"/>
</dbReference>
<dbReference type="GO" id="GO:0005840">
    <property type="term" value="C:ribosome"/>
    <property type="evidence" value="ECO:0007669"/>
    <property type="project" value="UniProtKB-KW"/>
</dbReference>
<dbReference type="GO" id="GO:0019843">
    <property type="term" value="F:rRNA binding"/>
    <property type="evidence" value="ECO:0007669"/>
    <property type="project" value="UniProtKB-UniRule"/>
</dbReference>
<dbReference type="GO" id="GO:0003735">
    <property type="term" value="F:structural constituent of ribosome"/>
    <property type="evidence" value="ECO:0007669"/>
    <property type="project" value="InterPro"/>
</dbReference>
<dbReference type="GO" id="GO:0000027">
    <property type="term" value="P:ribosomal large subunit assembly"/>
    <property type="evidence" value="ECO:0007669"/>
    <property type="project" value="UniProtKB-UniRule"/>
</dbReference>
<dbReference type="GO" id="GO:0006412">
    <property type="term" value="P:translation"/>
    <property type="evidence" value="ECO:0007669"/>
    <property type="project" value="InterPro"/>
</dbReference>
<dbReference type="CDD" id="cd07026">
    <property type="entry name" value="Ribosomal_L20"/>
    <property type="match status" value="1"/>
</dbReference>
<dbReference type="FunFam" id="1.10.1900.20:FF:000001">
    <property type="entry name" value="50S ribosomal protein L20"/>
    <property type="match status" value="1"/>
</dbReference>
<dbReference type="Gene3D" id="6.10.160.10">
    <property type="match status" value="1"/>
</dbReference>
<dbReference type="Gene3D" id="1.10.1900.20">
    <property type="entry name" value="Ribosomal protein L20"/>
    <property type="match status" value="1"/>
</dbReference>
<dbReference type="HAMAP" id="MF_00382">
    <property type="entry name" value="Ribosomal_bL20"/>
    <property type="match status" value="1"/>
</dbReference>
<dbReference type="InterPro" id="IPR005813">
    <property type="entry name" value="Ribosomal_bL20"/>
</dbReference>
<dbReference type="InterPro" id="IPR049946">
    <property type="entry name" value="RIBOSOMAL_L20_CS"/>
</dbReference>
<dbReference type="InterPro" id="IPR035566">
    <property type="entry name" value="Ribosomal_protein_bL20_C"/>
</dbReference>
<dbReference type="NCBIfam" id="TIGR01032">
    <property type="entry name" value="rplT_bact"/>
    <property type="match status" value="1"/>
</dbReference>
<dbReference type="PANTHER" id="PTHR10986">
    <property type="entry name" value="39S RIBOSOMAL PROTEIN L20"/>
    <property type="match status" value="1"/>
</dbReference>
<dbReference type="Pfam" id="PF00453">
    <property type="entry name" value="Ribosomal_L20"/>
    <property type="match status" value="1"/>
</dbReference>
<dbReference type="PRINTS" id="PR00062">
    <property type="entry name" value="RIBOSOMALL20"/>
</dbReference>
<dbReference type="SUPFAM" id="SSF74731">
    <property type="entry name" value="Ribosomal protein L20"/>
    <property type="match status" value="1"/>
</dbReference>
<dbReference type="PROSITE" id="PS00937">
    <property type="entry name" value="RIBOSOMAL_L20"/>
    <property type="match status" value="1"/>
</dbReference>
<feature type="chain" id="PRO_1000049044" description="Large ribosomal subunit protein bL20">
    <location>
        <begin position="1"/>
        <end position="118"/>
    </location>
</feature>
<name>RL20_STUS1</name>
<organism>
    <name type="scientific">Stutzerimonas stutzeri (strain A1501)</name>
    <name type="common">Pseudomonas stutzeri</name>
    <dbReference type="NCBI Taxonomy" id="379731"/>
    <lineage>
        <taxon>Bacteria</taxon>
        <taxon>Pseudomonadati</taxon>
        <taxon>Pseudomonadota</taxon>
        <taxon>Gammaproteobacteria</taxon>
        <taxon>Pseudomonadales</taxon>
        <taxon>Pseudomonadaceae</taxon>
        <taxon>Stutzerimonas</taxon>
    </lineage>
</organism>
<comment type="function">
    <text evidence="1">Binds directly to 23S ribosomal RNA and is necessary for the in vitro assembly process of the 50S ribosomal subunit. It is not involved in the protein synthesizing functions of that subunit.</text>
</comment>
<comment type="similarity">
    <text evidence="1">Belongs to the bacterial ribosomal protein bL20 family.</text>
</comment>
<evidence type="ECO:0000255" key="1">
    <source>
        <dbReference type="HAMAP-Rule" id="MF_00382"/>
    </source>
</evidence>
<evidence type="ECO:0000305" key="2"/>
<protein>
    <recommendedName>
        <fullName evidence="1">Large ribosomal subunit protein bL20</fullName>
    </recommendedName>
    <alternativeName>
        <fullName evidence="2">50S ribosomal protein L20</fullName>
    </alternativeName>
</protein>
<keyword id="KW-1185">Reference proteome</keyword>
<keyword id="KW-0687">Ribonucleoprotein</keyword>
<keyword id="KW-0689">Ribosomal protein</keyword>
<keyword id="KW-0694">RNA-binding</keyword>
<keyword id="KW-0699">rRNA-binding</keyword>
<gene>
    <name evidence="1" type="primary">rplT</name>
    <name type="ordered locus">PST_2366</name>
</gene>